<keyword id="KW-1003">Cell membrane</keyword>
<keyword id="KW-0325">Glycoprotein</keyword>
<keyword id="KW-0472">Membrane</keyword>
<keyword id="KW-1185">Reference proteome</keyword>
<keyword id="KW-0732">Signal</keyword>
<keyword id="KW-0812">Transmembrane</keyword>
<keyword id="KW-1133">Transmembrane helix</keyword>
<gene>
    <name type="ordered locus">YNL033W</name>
    <name type="ORF">N2743</name>
</gene>
<proteinExistence type="evidence at protein level"/>
<evidence type="ECO:0000255" key="1"/>
<evidence type="ECO:0000269" key="2">
    <source>
    </source>
</evidence>
<evidence type="ECO:0000305" key="3"/>
<protein>
    <recommendedName>
        <fullName>Uncharacterized membrane protein YNL033W</fullName>
    </recommendedName>
</protein>
<reference key="1">
    <citation type="journal article" date="1997" name="Nature">
        <title>The nucleotide sequence of Saccharomyces cerevisiae chromosome XIV and its evolutionary implications.</title>
        <authorList>
            <person name="Philippsen P."/>
            <person name="Kleine K."/>
            <person name="Poehlmann R."/>
            <person name="Duesterhoeft A."/>
            <person name="Hamberg K."/>
            <person name="Hegemann J.H."/>
            <person name="Obermaier B."/>
            <person name="Urrestarazu L.A."/>
            <person name="Aert R."/>
            <person name="Albermann K."/>
            <person name="Altmann R."/>
            <person name="Andre B."/>
            <person name="Baladron V."/>
            <person name="Ballesta J.P.G."/>
            <person name="Becam A.-M."/>
            <person name="Beinhauer J.D."/>
            <person name="Boskovic J."/>
            <person name="Buitrago M.J."/>
            <person name="Bussereau F."/>
            <person name="Coster F."/>
            <person name="Crouzet M."/>
            <person name="D'Angelo M."/>
            <person name="Dal Pero F."/>
            <person name="De Antoni A."/>
            <person name="del Rey F."/>
            <person name="Doignon F."/>
            <person name="Domdey H."/>
            <person name="Dubois E."/>
            <person name="Fiedler T.A."/>
            <person name="Fleig U."/>
            <person name="Floeth M."/>
            <person name="Fritz C."/>
            <person name="Gaillardin C."/>
            <person name="Garcia-Cantalejo J.M."/>
            <person name="Glansdorff N."/>
            <person name="Goffeau A."/>
            <person name="Gueldener U."/>
            <person name="Herbert C.J."/>
            <person name="Heumann K."/>
            <person name="Heuss-Neitzel D."/>
            <person name="Hilbert H."/>
            <person name="Hinni K."/>
            <person name="Iraqui Houssaini I."/>
            <person name="Jacquet M."/>
            <person name="Jimenez A."/>
            <person name="Jonniaux J.-L."/>
            <person name="Karpfinger-Hartl L."/>
            <person name="Lanfranchi G."/>
            <person name="Lepingle A."/>
            <person name="Levesque H."/>
            <person name="Lyck R."/>
            <person name="Maftahi M."/>
            <person name="Mallet L."/>
            <person name="Maurer C.T.C."/>
            <person name="Messenguy F."/>
            <person name="Mewes H.-W."/>
            <person name="Moestl D."/>
            <person name="Nasr F."/>
            <person name="Nicaud J.-M."/>
            <person name="Niedenthal R.K."/>
            <person name="Pandolfo D."/>
            <person name="Pierard A."/>
            <person name="Piravandi E."/>
            <person name="Planta R.J."/>
            <person name="Pohl T.M."/>
            <person name="Purnelle B."/>
            <person name="Rebischung C."/>
            <person name="Remacha M.A."/>
            <person name="Revuelta J.L."/>
            <person name="Rinke M."/>
            <person name="Saiz J.E."/>
            <person name="Sartorello F."/>
            <person name="Scherens B."/>
            <person name="Sen-Gupta M."/>
            <person name="Soler-Mira A."/>
            <person name="Urbanus J.H.M."/>
            <person name="Valle G."/>
            <person name="Van Dyck L."/>
            <person name="Verhasselt P."/>
            <person name="Vierendeels F."/>
            <person name="Vissers S."/>
            <person name="Voet M."/>
            <person name="Volckaert G."/>
            <person name="Wach A."/>
            <person name="Wambutt R."/>
            <person name="Wedler H."/>
            <person name="Zollner A."/>
            <person name="Hani J."/>
        </authorList>
    </citation>
    <scope>NUCLEOTIDE SEQUENCE [LARGE SCALE GENOMIC DNA]</scope>
    <source>
        <strain>ATCC 204508 / S288c</strain>
    </source>
</reference>
<reference key="2">
    <citation type="journal article" date="2014" name="G3 (Bethesda)">
        <title>The reference genome sequence of Saccharomyces cerevisiae: Then and now.</title>
        <authorList>
            <person name="Engel S.R."/>
            <person name="Dietrich F.S."/>
            <person name="Fisk D.G."/>
            <person name="Binkley G."/>
            <person name="Balakrishnan R."/>
            <person name="Costanzo M.C."/>
            <person name="Dwight S.S."/>
            <person name="Hitz B.C."/>
            <person name="Karra K."/>
            <person name="Nash R.S."/>
            <person name="Weng S."/>
            <person name="Wong E.D."/>
            <person name="Lloyd P."/>
            <person name="Skrzypek M.S."/>
            <person name="Miyasato S.R."/>
            <person name="Simison M."/>
            <person name="Cherry J.M."/>
        </authorList>
    </citation>
    <scope>GENOME REANNOTATION</scope>
    <source>
        <strain>ATCC 204508 / S288c</strain>
    </source>
</reference>
<reference key="3">
    <citation type="journal article" date="2003" name="Nature">
        <title>Global analysis of protein expression in yeast.</title>
        <authorList>
            <person name="Ghaemmaghami S."/>
            <person name="Huh W.-K."/>
            <person name="Bower K."/>
            <person name="Howson R.W."/>
            <person name="Belle A."/>
            <person name="Dephoure N."/>
            <person name="O'Shea E.K."/>
            <person name="Weissman J.S."/>
        </authorList>
    </citation>
    <scope>LEVEL OF PROTEIN EXPRESSION [LARGE SCALE ANALYSIS]</scope>
</reference>
<reference key="4">
    <citation type="journal article" date="2006" name="Proc. Natl. Acad. Sci. U.S.A.">
        <title>A global topology map of the Saccharomyces cerevisiae membrane proteome.</title>
        <authorList>
            <person name="Kim H."/>
            <person name="Melen K."/>
            <person name="Oesterberg M."/>
            <person name="von Heijne G."/>
        </authorList>
    </citation>
    <scope>TOPOLOGY [LARGE SCALE ANALYSIS]</scope>
    <source>
        <strain>ATCC 208353 / W303-1A</strain>
    </source>
</reference>
<dbReference type="EMBL" id="Z71309">
    <property type="protein sequence ID" value="CAA95896.1"/>
    <property type="molecule type" value="Genomic_DNA"/>
</dbReference>
<dbReference type="EMBL" id="BK006947">
    <property type="protein sequence ID" value="DAA10512.1"/>
    <property type="molecule type" value="Genomic_DNA"/>
</dbReference>
<dbReference type="RefSeq" id="NP_014365.3">
    <property type="nucleotide sequence ID" value="NM_001182872.3"/>
</dbReference>
<dbReference type="BioGRID" id="35794">
    <property type="interactions" value="27"/>
</dbReference>
<dbReference type="FunCoup" id="P53964">
    <property type="interactions" value="29"/>
</dbReference>
<dbReference type="STRING" id="4932.YNL033W"/>
<dbReference type="GlyGen" id="P53964">
    <property type="glycosylation" value="1 site"/>
</dbReference>
<dbReference type="PaxDb" id="4932-YNL033W"/>
<dbReference type="EnsemblFungi" id="YNL033W_mRNA">
    <property type="protein sequence ID" value="YNL033W"/>
    <property type="gene ID" value="YNL033W"/>
</dbReference>
<dbReference type="GeneID" id="855698"/>
<dbReference type="KEGG" id="sce:YNL033W"/>
<dbReference type="AGR" id="SGD:S000004978"/>
<dbReference type="SGD" id="S000004978">
    <property type="gene designation" value="YNL033W"/>
</dbReference>
<dbReference type="VEuPathDB" id="FungiDB:YNL033W"/>
<dbReference type="HOGENOM" id="CLU_980567_0_0_1"/>
<dbReference type="InParanoid" id="P53964"/>
<dbReference type="OrthoDB" id="4051121at2759"/>
<dbReference type="BioCyc" id="YEAST:G3O-33070-MONOMER"/>
<dbReference type="PRO" id="PR:P53964"/>
<dbReference type="Proteomes" id="UP000002311">
    <property type="component" value="Chromosome XIV"/>
</dbReference>
<dbReference type="RNAct" id="P53964">
    <property type="molecule type" value="protein"/>
</dbReference>
<dbReference type="GO" id="GO:0005886">
    <property type="term" value="C:plasma membrane"/>
    <property type="evidence" value="ECO:0007669"/>
    <property type="project" value="UniProtKB-SubCell"/>
</dbReference>
<feature type="signal peptide" evidence="1">
    <location>
        <begin position="1"/>
        <end position="24"/>
    </location>
</feature>
<feature type="chain" id="PRO_0000014340" description="Uncharacterized membrane protein YNL033W">
    <location>
        <begin position="25"/>
        <end position="284"/>
    </location>
</feature>
<feature type="topological domain" description="Cytoplasmic" evidence="1">
    <location>
        <begin position="25"/>
        <end position="84"/>
    </location>
</feature>
<feature type="transmembrane region" description="Helical" evidence="1">
    <location>
        <begin position="85"/>
        <end position="104"/>
    </location>
</feature>
<feature type="topological domain" description="Extracellular" evidence="1">
    <location>
        <begin position="105"/>
        <end position="284"/>
    </location>
</feature>
<feature type="glycosylation site" description="N-linked (GlcNAc...) asparagine" evidence="1">
    <location>
        <position position="270"/>
    </location>
</feature>
<name>YND3_YEAST</name>
<organism>
    <name type="scientific">Saccharomyces cerevisiae (strain ATCC 204508 / S288c)</name>
    <name type="common">Baker's yeast</name>
    <dbReference type="NCBI Taxonomy" id="559292"/>
    <lineage>
        <taxon>Eukaryota</taxon>
        <taxon>Fungi</taxon>
        <taxon>Dikarya</taxon>
        <taxon>Ascomycota</taxon>
        <taxon>Saccharomycotina</taxon>
        <taxon>Saccharomycetes</taxon>
        <taxon>Saccharomycetales</taxon>
        <taxon>Saccharomycetaceae</taxon>
        <taxon>Saccharomyces</taxon>
    </lineage>
</organism>
<sequence>MLYSRESRTTVLFLALVTSLTVLCHSVDVTTVFTTSTITEITTVTAAPQPQNKAETALNTATNIIQTMQFLFNCAPFKWKGPLKITSCALNFIVLLLTAWGYLLKYLQENKLNSDADMEKMVGLGFGEMVGRIFGKGVGKAFTKMDITQKLVYPFEGSNRQKCLLMTVGENSIVPFHDLFTEICFDQYTLDSLSHHNHGSISILDAGSVSALGFADISSKMPSVSELYTLFGDYTIEVLGGITKLASTLNREDWQGERNGFAVLSRDRPNQTLLSVHMYSSSLL</sequence>
<accession>P53964</accession>
<accession>D6W1E6</accession>
<comment type="subcellular location">
    <subcellularLocation>
        <location>Cell membrane</location>
        <topology>Single-pass membrane protein</topology>
    </subcellularLocation>
</comment>
<comment type="miscellaneous">
    <text evidence="2">Present with 396 molecules/cell in log phase SD medium.</text>
</comment>
<comment type="similarity">
    <text evidence="3">To yeast YNL019c.</text>
</comment>